<gene>
    <name type="ORF">Lacbi1:307192</name>
    <name type="ORF">LACBIDRAFT_307192</name>
</gene>
<evidence type="ECO:0000255" key="1"/>
<evidence type="ECO:0000256" key="2">
    <source>
        <dbReference type="SAM" id="MobiDB-lite"/>
    </source>
</evidence>
<evidence type="ECO:0000269" key="3">
    <source>
    </source>
</evidence>
<evidence type="ECO:0000303" key="4">
    <source>
    </source>
</evidence>
<evidence type="ECO:0000305" key="5"/>
<evidence type="ECO:0000305" key="6">
    <source>
    </source>
</evidence>
<protein>
    <recommendedName>
        <fullName evidence="4">Aquaporin Lacbi1:307192</fullName>
    </recommendedName>
</protein>
<organism>
    <name type="scientific">Laccaria bicolor (strain S238N-H82 / ATCC MYA-4686)</name>
    <name type="common">Bicoloured deceiver</name>
    <name type="synonym">Laccaria laccata var. bicolor</name>
    <dbReference type="NCBI Taxonomy" id="486041"/>
    <lineage>
        <taxon>Eukaryota</taxon>
        <taxon>Fungi</taxon>
        <taxon>Dikarya</taxon>
        <taxon>Basidiomycota</taxon>
        <taxon>Agaricomycotina</taxon>
        <taxon>Agaricomycetes</taxon>
        <taxon>Agaricomycetidae</taxon>
        <taxon>Agaricales</taxon>
        <taxon>Agaricineae</taxon>
        <taxon>Hydnangiaceae</taxon>
        <taxon>Laccaria</taxon>
    </lineage>
</organism>
<accession>B0DPL3</accession>
<dbReference type="EMBL" id="DS547124">
    <property type="protein sequence ID" value="EDR03473.1"/>
    <property type="molecule type" value="Genomic_DNA"/>
</dbReference>
<dbReference type="RefSeq" id="XP_001885929.1">
    <property type="nucleotide sequence ID" value="XM_001885894.1"/>
</dbReference>
<dbReference type="SMR" id="B0DPL3"/>
<dbReference type="STRING" id="486041.B0DPL3"/>
<dbReference type="GeneID" id="6081549"/>
<dbReference type="KEGG" id="lbc:LACBIDRAFT_307192"/>
<dbReference type="HOGENOM" id="CLU_020019_6_1_1"/>
<dbReference type="InParanoid" id="B0DPL3"/>
<dbReference type="OrthoDB" id="3222at2759"/>
<dbReference type="Proteomes" id="UP000001194">
    <property type="component" value="Unassembled WGS sequence"/>
</dbReference>
<dbReference type="GO" id="GO:0005886">
    <property type="term" value="C:plasma membrane"/>
    <property type="evidence" value="ECO:0007669"/>
    <property type="project" value="TreeGrafter"/>
</dbReference>
<dbReference type="GO" id="GO:0015254">
    <property type="term" value="F:glycerol channel activity"/>
    <property type="evidence" value="ECO:0007669"/>
    <property type="project" value="TreeGrafter"/>
</dbReference>
<dbReference type="GO" id="GO:0015250">
    <property type="term" value="F:water channel activity"/>
    <property type="evidence" value="ECO:0007669"/>
    <property type="project" value="TreeGrafter"/>
</dbReference>
<dbReference type="Gene3D" id="1.20.1080.10">
    <property type="entry name" value="Glycerol uptake facilitator protein"/>
    <property type="match status" value="1"/>
</dbReference>
<dbReference type="InterPro" id="IPR023271">
    <property type="entry name" value="Aquaporin-like"/>
</dbReference>
<dbReference type="InterPro" id="IPR000425">
    <property type="entry name" value="MIP"/>
</dbReference>
<dbReference type="InterPro" id="IPR050363">
    <property type="entry name" value="MIP/Aquaporin"/>
</dbReference>
<dbReference type="PANTHER" id="PTHR43829:SF14">
    <property type="entry name" value="AQUAPORIN 3"/>
    <property type="match status" value="1"/>
</dbReference>
<dbReference type="PANTHER" id="PTHR43829">
    <property type="entry name" value="AQUAPORIN OR AQUAGLYCEROPORIN RELATED"/>
    <property type="match status" value="1"/>
</dbReference>
<dbReference type="Pfam" id="PF00230">
    <property type="entry name" value="MIP"/>
    <property type="match status" value="1"/>
</dbReference>
<dbReference type="PRINTS" id="PR00783">
    <property type="entry name" value="MINTRINSICP"/>
</dbReference>
<dbReference type="SUPFAM" id="SSF81338">
    <property type="entry name" value="Aquaporin-like"/>
    <property type="match status" value="1"/>
</dbReference>
<feature type="chain" id="PRO_0000457454" description="Aquaporin Lacbi1:307192">
    <location>
        <begin position="1"/>
        <end position="330"/>
    </location>
</feature>
<feature type="topological domain" description="Cytoplasmic" evidence="6">
    <location>
        <begin position="1"/>
        <end position="40"/>
    </location>
</feature>
<feature type="transmembrane region" description="Helical" evidence="1">
    <location>
        <begin position="41"/>
        <end position="61"/>
    </location>
</feature>
<feature type="topological domain" description="Extracellular" evidence="6">
    <location>
        <begin position="62"/>
        <end position="71"/>
    </location>
</feature>
<feature type="transmembrane region" description="Helical" evidence="1">
    <location>
        <begin position="72"/>
        <end position="92"/>
    </location>
</feature>
<feature type="topological domain" description="Cytoplasmic" evidence="6">
    <location>
        <begin position="93"/>
        <end position="124"/>
    </location>
</feature>
<feature type="transmembrane region" description="Helical" evidence="1">
    <location>
        <begin position="125"/>
        <end position="145"/>
    </location>
</feature>
<feature type="topological domain" description="Extracellular" evidence="6">
    <location>
        <begin position="146"/>
        <end position="157"/>
    </location>
</feature>
<feature type="transmembrane region" description="Helical" evidence="1">
    <location>
        <begin position="158"/>
        <end position="178"/>
    </location>
</feature>
<feature type="topological domain" description="Cytoplasmic" evidence="6">
    <location>
        <begin position="179"/>
        <end position="183"/>
    </location>
</feature>
<feature type="transmembrane region" description="Helical" evidence="1">
    <location>
        <begin position="184"/>
        <end position="204"/>
    </location>
</feature>
<feature type="topological domain" description="Extracellular" evidence="6">
    <location>
        <begin position="205"/>
        <end position="207"/>
    </location>
</feature>
<feature type="transmembrane region" description="Helical" evidence="1">
    <location>
        <begin position="208"/>
        <end position="228"/>
    </location>
</feature>
<feature type="topological domain" description="Cytoplasmic" evidence="6">
    <location>
        <begin position="229"/>
        <end position="264"/>
    </location>
</feature>
<feature type="transmembrane region" description="Helical" evidence="1">
    <location>
        <begin position="265"/>
        <end position="285"/>
    </location>
</feature>
<feature type="topological domain" description="Extracellular" evidence="6">
    <location>
        <begin position="286"/>
        <end position="330"/>
    </location>
</feature>
<feature type="region of interest" description="Disordered" evidence="2">
    <location>
        <begin position="308"/>
        <end position="330"/>
    </location>
</feature>
<feature type="short sequence motif" description="NPA 1" evidence="6">
    <location>
        <begin position="99"/>
        <end position="101"/>
    </location>
</feature>
<feature type="short sequence motif" description="NPA 2" evidence="6">
    <location>
        <begin position="238"/>
        <end position="240"/>
    </location>
</feature>
<feature type="compositionally biased region" description="Basic and acidic residues" evidence="2">
    <location>
        <begin position="312"/>
        <end position="330"/>
    </location>
</feature>
<sequence>MSATPIIHLRDVKKRTGVLNAWERVRNKPQVHWAMECFAEALGVFFYVYFGLGSTAAWVIGNILKQSGLSSVFQIGFAYAFGILFAIGVCAATSGGHFNPCVTIAFTIFRGFPPLKAVRYIVAQILGAYIASALVYNQWKVLIVESELLLKQAGVYETTMFTPNGPAGIFALYLLPGAQTLPRAFLNEFVNCFVLALVIWAALDPTSFMIPPVMAPFIIAAAYAGSIWGYAVPAISLNSARDIGCRLFALTIWGKSAAGGSYSAITALVNIPATLLAAVVYELFLVDSDRVVAGSHLEFMNVAANHRRHRHQAEDDNHGDADDSSQEKPV</sequence>
<proteinExistence type="evidence at protein level"/>
<reference key="1">
    <citation type="journal article" date="2008" name="Nature">
        <title>The genome of Laccaria bicolor provides insights into mycorrhizal symbiosis.</title>
        <authorList>
            <person name="Martin F."/>
            <person name="Aerts A."/>
            <person name="Ahren D."/>
            <person name="Brun A."/>
            <person name="Danchin E.G.J."/>
            <person name="Duchaussoy F."/>
            <person name="Gibon J."/>
            <person name="Kohler A."/>
            <person name="Lindquist E."/>
            <person name="Pereda V."/>
            <person name="Salamov A."/>
            <person name="Shapiro H.J."/>
            <person name="Wuyts J."/>
            <person name="Blaudez D."/>
            <person name="Buee M."/>
            <person name="Brokstein P."/>
            <person name="Canbaeck B."/>
            <person name="Cohen D."/>
            <person name="Courty P.E."/>
            <person name="Coutinho P.M."/>
            <person name="Delaruelle C."/>
            <person name="Detter J.C."/>
            <person name="Deveau A."/>
            <person name="DiFazio S."/>
            <person name="Duplessis S."/>
            <person name="Fraissinet-Tachet L."/>
            <person name="Lucic E."/>
            <person name="Frey-Klett P."/>
            <person name="Fourrey C."/>
            <person name="Feussner I."/>
            <person name="Gay G."/>
            <person name="Grimwood J."/>
            <person name="Hoegger P.J."/>
            <person name="Jain P."/>
            <person name="Kilaru S."/>
            <person name="Labbe J."/>
            <person name="Lin Y.C."/>
            <person name="Legue V."/>
            <person name="Le Tacon F."/>
            <person name="Marmeisse R."/>
            <person name="Melayah D."/>
            <person name="Montanini B."/>
            <person name="Muratet M."/>
            <person name="Nehls U."/>
            <person name="Niculita-Hirzel H."/>
            <person name="Oudot-Le Secq M.P."/>
            <person name="Peter M."/>
            <person name="Quesneville H."/>
            <person name="Rajashekar B."/>
            <person name="Reich M."/>
            <person name="Rouhier N."/>
            <person name="Schmutz J."/>
            <person name="Yin T."/>
            <person name="Chalot M."/>
            <person name="Henrissat B."/>
            <person name="Kuees U."/>
            <person name="Lucas S."/>
            <person name="Van de Peer Y."/>
            <person name="Podila G.K."/>
            <person name="Polle A."/>
            <person name="Pukkila P.J."/>
            <person name="Richardson P.M."/>
            <person name="Rouze P."/>
            <person name="Sanders I.R."/>
            <person name="Stajich J.E."/>
            <person name="Tunlid A."/>
            <person name="Tuskan G."/>
            <person name="Grigoriev I.V."/>
        </authorList>
    </citation>
    <scope>NUCLEOTIDE SEQUENCE [LARGE SCALE GENOMIC DNA]</scope>
    <source>
        <strain>S238N-H82 / ATCC MYA-4686</strain>
    </source>
</reference>
<reference key="2">
    <citation type="journal article" date="2011" name="New Phytol.">
        <title>The aquaporin gene family of the ectomycorrhizal fungus Laccaria bicolor: lessons for symbiotic functions.</title>
        <authorList>
            <person name="Dietz S."/>
            <person name="von Buelow J."/>
            <person name="Beitz E."/>
            <person name="Nehls U."/>
        </authorList>
    </citation>
    <scope>FUNCTION</scope>
    <scope>DOMAIN</scope>
    <scope>TOPOLOGY</scope>
    <scope>INDUCTION</scope>
</reference>
<keyword id="KW-0472">Membrane</keyword>
<keyword id="KW-1185">Reference proteome</keyword>
<keyword id="KW-0677">Repeat</keyword>
<keyword id="KW-0812">Transmembrane</keyword>
<keyword id="KW-1133">Transmembrane helix</keyword>
<keyword id="KW-0813">Transport</keyword>
<name>AQP3_LACBS</name>
<comment type="function">
    <text evidence="3">Water channel-like protein that does not show transport of water nor ammonium across membranes.</text>
</comment>
<comment type="subcellular location">
    <subcellularLocation>
        <location evidence="1">Membrane</location>
        <topology evidence="1">Multi-pass membrane protein</topology>
    </subcellularLocation>
</comment>
<comment type="induction">
    <text evidence="3">Expression is induced 2-fold during ectomycorrhiza formation.</text>
</comment>
<comment type="domain">
    <text evidence="6">Aquaporins contain two tandem repeats each containing three membrane-spanning domains and a pore-forming loop with the signature motif Asn-Pro-Ala (NPA) (Probable). Lacbi1:307192 has NPC/NSA motifs which is in accordance with the fungal aquaporins (NPx and NxA) (Probable).</text>
</comment>
<comment type="similarity">
    <text evidence="5">Belongs to the MIP/aquaporin (TC 1.A.8) family.</text>
</comment>